<gene>
    <name evidence="1" type="primary">truB</name>
    <name type="ordered locus">mhp104</name>
</gene>
<proteinExistence type="inferred from homology"/>
<feature type="chain" id="PRO_0000121865" description="tRNA pseudouridine synthase B">
    <location>
        <begin position="1"/>
        <end position="327"/>
    </location>
</feature>
<feature type="active site" description="Nucleophile" evidence="1">
    <location>
        <position position="83"/>
    </location>
</feature>
<evidence type="ECO:0000255" key="1">
    <source>
        <dbReference type="HAMAP-Rule" id="MF_01080"/>
    </source>
</evidence>
<accession>Q601U7</accession>
<comment type="function">
    <text evidence="1">Responsible for synthesis of pseudouridine from uracil-55 in the psi GC loop of transfer RNAs.</text>
</comment>
<comment type="catalytic activity">
    <reaction evidence="1">
        <text>uridine(55) in tRNA = pseudouridine(55) in tRNA</text>
        <dbReference type="Rhea" id="RHEA:42532"/>
        <dbReference type="Rhea" id="RHEA-COMP:10101"/>
        <dbReference type="Rhea" id="RHEA-COMP:10102"/>
        <dbReference type="ChEBI" id="CHEBI:65314"/>
        <dbReference type="ChEBI" id="CHEBI:65315"/>
        <dbReference type="EC" id="5.4.99.25"/>
    </reaction>
</comment>
<comment type="similarity">
    <text evidence="1">Belongs to the pseudouridine synthase TruB family. Type 1 subfamily.</text>
</comment>
<keyword id="KW-0413">Isomerase</keyword>
<keyword id="KW-0819">tRNA processing</keyword>
<organism>
    <name type="scientific">Mesomycoplasma hyopneumoniae (strain 232)</name>
    <name type="common">Mycoplasma hyopneumoniae</name>
    <dbReference type="NCBI Taxonomy" id="295358"/>
    <lineage>
        <taxon>Bacteria</taxon>
        <taxon>Bacillati</taxon>
        <taxon>Mycoplasmatota</taxon>
        <taxon>Mycoplasmoidales</taxon>
        <taxon>Metamycoplasmataceae</taxon>
        <taxon>Mesomycoplasma</taxon>
    </lineage>
</organism>
<name>TRUB_MESH2</name>
<reference key="1">
    <citation type="journal article" date="2004" name="J. Bacteriol.">
        <title>The genome sequence of Mycoplasma hyopneumoniae strain 232, the agent of swine mycoplasmosis.</title>
        <authorList>
            <person name="Minion F.C."/>
            <person name="Lefkowitz E.J."/>
            <person name="Madsen M.L."/>
            <person name="Cleary B.J."/>
            <person name="Swartzell S.M."/>
            <person name="Mahairas G.G."/>
        </authorList>
    </citation>
    <scope>NUCLEOTIDE SEQUENCE [LARGE SCALE GENOMIC DNA]</scope>
    <source>
        <strain>232</strain>
    </source>
</reference>
<dbReference type="EC" id="5.4.99.25" evidence="1"/>
<dbReference type="EMBL" id="AE017332">
    <property type="protein sequence ID" value="AAV27711.1"/>
    <property type="molecule type" value="Genomic_DNA"/>
</dbReference>
<dbReference type="SMR" id="Q601U7"/>
<dbReference type="KEGG" id="mhy:mhp104"/>
<dbReference type="eggNOG" id="COG0130">
    <property type="taxonomic scope" value="Bacteria"/>
</dbReference>
<dbReference type="HOGENOM" id="CLU_032087_0_2_14"/>
<dbReference type="PhylomeDB" id="Q601U7"/>
<dbReference type="Proteomes" id="UP000006822">
    <property type="component" value="Chromosome"/>
</dbReference>
<dbReference type="GO" id="GO:0003723">
    <property type="term" value="F:RNA binding"/>
    <property type="evidence" value="ECO:0007669"/>
    <property type="project" value="InterPro"/>
</dbReference>
<dbReference type="GO" id="GO:0160148">
    <property type="term" value="F:tRNA pseudouridine(55) synthase activity"/>
    <property type="evidence" value="ECO:0007669"/>
    <property type="project" value="UniProtKB-EC"/>
</dbReference>
<dbReference type="GO" id="GO:1990481">
    <property type="term" value="P:mRNA pseudouridine synthesis"/>
    <property type="evidence" value="ECO:0007669"/>
    <property type="project" value="TreeGrafter"/>
</dbReference>
<dbReference type="GO" id="GO:0031119">
    <property type="term" value="P:tRNA pseudouridine synthesis"/>
    <property type="evidence" value="ECO:0007669"/>
    <property type="project" value="UniProtKB-UniRule"/>
</dbReference>
<dbReference type="CDD" id="cd02573">
    <property type="entry name" value="PseudoU_synth_EcTruB"/>
    <property type="match status" value="1"/>
</dbReference>
<dbReference type="Gene3D" id="3.30.2350.10">
    <property type="entry name" value="Pseudouridine synthase"/>
    <property type="match status" value="1"/>
</dbReference>
<dbReference type="HAMAP" id="MF_01080">
    <property type="entry name" value="TruB_bact"/>
    <property type="match status" value="1"/>
</dbReference>
<dbReference type="InterPro" id="IPR020103">
    <property type="entry name" value="PsdUridine_synth_cat_dom_sf"/>
</dbReference>
<dbReference type="InterPro" id="IPR002501">
    <property type="entry name" value="PsdUridine_synth_N"/>
</dbReference>
<dbReference type="InterPro" id="IPR014780">
    <property type="entry name" value="tRNA_psdUridine_synth_TruB"/>
</dbReference>
<dbReference type="NCBIfam" id="TIGR00431">
    <property type="entry name" value="TruB"/>
    <property type="match status" value="1"/>
</dbReference>
<dbReference type="PANTHER" id="PTHR13767:SF2">
    <property type="entry name" value="PSEUDOURIDYLATE SYNTHASE TRUB1"/>
    <property type="match status" value="1"/>
</dbReference>
<dbReference type="PANTHER" id="PTHR13767">
    <property type="entry name" value="TRNA-PSEUDOURIDINE SYNTHASE"/>
    <property type="match status" value="1"/>
</dbReference>
<dbReference type="Pfam" id="PF01509">
    <property type="entry name" value="TruB_N"/>
    <property type="match status" value="1"/>
</dbReference>
<dbReference type="SUPFAM" id="SSF55120">
    <property type="entry name" value="Pseudouridine synthase"/>
    <property type="match status" value="1"/>
</dbReference>
<sequence length="327" mass="37416">MADTLDLGSSAFGCKGSSPFLRTTMIGQPCVDFFFFFFFFFKKKKKKMITFLYKPKKISSAKFLRQWSKTNLIKKAGHAGTLDPLASGLLLVATEDDTKLLQYLDQKTKTYLAKIQFGFWSTTYDAEGQIYGVEQPIKVTKDNLEQALNRLSESQKQVPPVFSSKKVSGKSAYHYARQGKQIELKPISIKISKTILINFDEKLQNCVIMWQVSRGCYIRSLADDLGKMLKTRAYLSDLERTKIGNFDKKFLNQSLKPQDLFDLQQVKLDLENLELLLQGKKINYFAKNSELNTLIFKDEVVGFGKIINNVLITKKLFGNRIKKIINT</sequence>
<protein>
    <recommendedName>
        <fullName evidence="1">tRNA pseudouridine synthase B</fullName>
        <ecNumber evidence="1">5.4.99.25</ecNumber>
    </recommendedName>
    <alternativeName>
        <fullName evidence="1">tRNA pseudouridine(55) synthase</fullName>
        <shortName evidence="1">Psi55 synthase</shortName>
    </alternativeName>
    <alternativeName>
        <fullName evidence="1">tRNA pseudouridylate synthase</fullName>
    </alternativeName>
    <alternativeName>
        <fullName evidence="1">tRNA-uridine isomerase</fullName>
    </alternativeName>
</protein>